<accession>Q6NGP4</accession>
<reference key="1">
    <citation type="journal article" date="2003" name="Nucleic Acids Res.">
        <title>The complete genome sequence and analysis of Corynebacterium diphtheriae NCTC13129.</title>
        <authorList>
            <person name="Cerdeno-Tarraga A.-M."/>
            <person name="Efstratiou A."/>
            <person name="Dover L.G."/>
            <person name="Holden M.T.G."/>
            <person name="Pallen M.J."/>
            <person name="Bentley S.D."/>
            <person name="Besra G.S."/>
            <person name="Churcher C.M."/>
            <person name="James K.D."/>
            <person name="De Zoysa A."/>
            <person name="Chillingworth T."/>
            <person name="Cronin A."/>
            <person name="Dowd L."/>
            <person name="Feltwell T."/>
            <person name="Hamlin N."/>
            <person name="Holroyd S."/>
            <person name="Jagels K."/>
            <person name="Moule S."/>
            <person name="Quail M.A."/>
            <person name="Rabbinowitsch E."/>
            <person name="Rutherford K.M."/>
            <person name="Thomson N.R."/>
            <person name="Unwin L."/>
            <person name="Whitehead S."/>
            <person name="Barrell B.G."/>
            <person name="Parkhill J."/>
        </authorList>
    </citation>
    <scope>NUCLEOTIDE SEQUENCE [LARGE SCALE GENOMIC DNA]</scope>
    <source>
        <strain>ATCC 700971 / NCTC 13129 / Biotype gravis</strain>
    </source>
</reference>
<dbReference type="EC" id="4.3.3.7" evidence="1"/>
<dbReference type="EMBL" id="BX248358">
    <property type="protein sequence ID" value="CAE49992.1"/>
    <property type="molecule type" value="Genomic_DNA"/>
</dbReference>
<dbReference type="RefSeq" id="WP_010935083.1">
    <property type="nucleotide sequence ID" value="NC_002935.2"/>
</dbReference>
<dbReference type="SMR" id="Q6NGP4"/>
<dbReference type="STRING" id="257309.DIP1464"/>
<dbReference type="KEGG" id="cdi:DIP1464"/>
<dbReference type="HOGENOM" id="CLU_049343_7_1_11"/>
<dbReference type="UniPathway" id="UPA00034">
    <property type="reaction ID" value="UER00017"/>
</dbReference>
<dbReference type="Proteomes" id="UP000002198">
    <property type="component" value="Chromosome"/>
</dbReference>
<dbReference type="GO" id="GO:0005829">
    <property type="term" value="C:cytosol"/>
    <property type="evidence" value="ECO:0007669"/>
    <property type="project" value="TreeGrafter"/>
</dbReference>
<dbReference type="GO" id="GO:0008840">
    <property type="term" value="F:4-hydroxy-tetrahydrodipicolinate synthase activity"/>
    <property type="evidence" value="ECO:0007669"/>
    <property type="project" value="UniProtKB-UniRule"/>
</dbReference>
<dbReference type="GO" id="GO:0019877">
    <property type="term" value="P:diaminopimelate biosynthetic process"/>
    <property type="evidence" value="ECO:0007669"/>
    <property type="project" value="UniProtKB-UniRule"/>
</dbReference>
<dbReference type="GO" id="GO:0009089">
    <property type="term" value="P:lysine biosynthetic process via diaminopimelate"/>
    <property type="evidence" value="ECO:0007669"/>
    <property type="project" value="UniProtKB-UniRule"/>
</dbReference>
<dbReference type="CDD" id="cd00950">
    <property type="entry name" value="DHDPS"/>
    <property type="match status" value="1"/>
</dbReference>
<dbReference type="Gene3D" id="3.20.20.70">
    <property type="entry name" value="Aldolase class I"/>
    <property type="match status" value="1"/>
</dbReference>
<dbReference type="HAMAP" id="MF_00418">
    <property type="entry name" value="DapA"/>
    <property type="match status" value="1"/>
</dbReference>
<dbReference type="InterPro" id="IPR013785">
    <property type="entry name" value="Aldolase_TIM"/>
</dbReference>
<dbReference type="InterPro" id="IPR005263">
    <property type="entry name" value="DapA"/>
</dbReference>
<dbReference type="InterPro" id="IPR002220">
    <property type="entry name" value="DapA-like"/>
</dbReference>
<dbReference type="InterPro" id="IPR020625">
    <property type="entry name" value="Schiff_base-form_aldolases_AS"/>
</dbReference>
<dbReference type="InterPro" id="IPR020624">
    <property type="entry name" value="Schiff_base-form_aldolases_CS"/>
</dbReference>
<dbReference type="NCBIfam" id="TIGR00674">
    <property type="entry name" value="dapA"/>
    <property type="match status" value="1"/>
</dbReference>
<dbReference type="PANTHER" id="PTHR12128:SF66">
    <property type="entry name" value="4-HYDROXY-2-OXOGLUTARATE ALDOLASE, MITOCHONDRIAL"/>
    <property type="match status" value="1"/>
</dbReference>
<dbReference type="PANTHER" id="PTHR12128">
    <property type="entry name" value="DIHYDRODIPICOLINATE SYNTHASE"/>
    <property type="match status" value="1"/>
</dbReference>
<dbReference type="Pfam" id="PF00701">
    <property type="entry name" value="DHDPS"/>
    <property type="match status" value="1"/>
</dbReference>
<dbReference type="PIRSF" id="PIRSF001365">
    <property type="entry name" value="DHDPS"/>
    <property type="match status" value="1"/>
</dbReference>
<dbReference type="PRINTS" id="PR00146">
    <property type="entry name" value="DHPICSNTHASE"/>
</dbReference>
<dbReference type="SMART" id="SM01130">
    <property type="entry name" value="DHDPS"/>
    <property type="match status" value="1"/>
</dbReference>
<dbReference type="SUPFAM" id="SSF51569">
    <property type="entry name" value="Aldolase"/>
    <property type="match status" value="1"/>
</dbReference>
<dbReference type="PROSITE" id="PS00665">
    <property type="entry name" value="DHDPS_1"/>
    <property type="match status" value="1"/>
</dbReference>
<dbReference type="PROSITE" id="PS00666">
    <property type="entry name" value="DHDPS_2"/>
    <property type="match status" value="1"/>
</dbReference>
<organism>
    <name type="scientific">Corynebacterium diphtheriae (strain ATCC 700971 / NCTC 13129 / Biotype gravis)</name>
    <dbReference type="NCBI Taxonomy" id="257309"/>
    <lineage>
        <taxon>Bacteria</taxon>
        <taxon>Bacillati</taxon>
        <taxon>Actinomycetota</taxon>
        <taxon>Actinomycetes</taxon>
        <taxon>Mycobacteriales</taxon>
        <taxon>Corynebacteriaceae</taxon>
        <taxon>Corynebacterium</taxon>
    </lineage>
</organism>
<proteinExistence type="inferred from homology"/>
<comment type="function">
    <text evidence="1">Catalyzes the condensation of (S)-aspartate-beta-semialdehyde [(S)-ASA] and pyruvate to 4-hydroxy-tetrahydrodipicolinate (HTPA).</text>
</comment>
<comment type="catalytic activity">
    <reaction evidence="1">
        <text>L-aspartate 4-semialdehyde + pyruvate = (2S,4S)-4-hydroxy-2,3,4,5-tetrahydrodipicolinate + H2O + H(+)</text>
        <dbReference type="Rhea" id="RHEA:34171"/>
        <dbReference type="ChEBI" id="CHEBI:15361"/>
        <dbReference type="ChEBI" id="CHEBI:15377"/>
        <dbReference type="ChEBI" id="CHEBI:15378"/>
        <dbReference type="ChEBI" id="CHEBI:67139"/>
        <dbReference type="ChEBI" id="CHEBI:537519"/>
        <dbReference type="EC" id="4.3.3.7"/>
    </reaction>
</comment>
<comment type="pathway">
    <text evidence="1">Amino-acid biosynthesis; L-lysine biosynthesis via DAP pathway; (S)-tetrahydrodipicolinate from L-aspartate: step 3/4.</text>
</comment>
<comment type="subunit">
    <text evidence="1">Homotetramer; dimer of dimers.</text>
</comment>
<comment type="subcellular location">
    <subcellularLocation>
        <location evidence="1">Cytoplasm</location>
    </subcellularLocation>
</comment>
<comment type="similarity">
    <text evidence="1">Belongs to the DapA family.</text>
</comment>
<comment type="caution">
    <text evidence="2">Was originally thought to be a dihydrodipicolinate synthase (DHDPS), catalyzing the condensation of (S)-aspartate-beta-semialdehyde [(S)-ASA] and pyruvate to dihydrodipicolinate (DHDP). However, it was shown in E.coli that the product of the enzymatic reaction is not dihydrodipicolinate but in fact (4S)-4-hydroxy-2,3,4,5-tetrahydro-(2S)-dipicolinic acid (HTPA), and that the consecutive dehydration reaction leading to DHDP is not spontaneous but catalyzed by DapB.</text>
</comment>
<keyword id="KW-0028">Amino-acid biosynthesis</keyword>
<keyword id="KW-0963">Cytoplasm</keyword>
<keyword id="KW-0220">Diaminopimelate biosynthesis</keyword>
<keyword id="KW-0456">Lyase</keyword>
<keyword id="KW-0457">Lysine biosynthesis</keyword>
<keyword id="KW-1185">Reference proteome</keyword>
<keyword id="KW-0704">Schiff base</keyword>
<sequence length="301" mass="31387">MSTGLTANNGIEEFGTIAVAMVTPFDANGALDIKAGQKLAAHLVSNGIDSLVLAGTTGESPTTSLEEKIDLLKAVKAEVGDSAKLIAGAGTNNTAASVEMARASAEAGADALLVVTPYYSKPSQEGIYQHFRTVSEATDLPICAYDIPPRSVVPIAPDTLCRLAALPMIKAVKDAKGDITAATTLIAETGLAWYSGDDPLNLPWLSVGATGFISVIGHLAPQLLREMYTNFNQGNLEKAREINAQLAPLVAAQARLGGVSLAKAGLRLQGIEVGDPRLPIVAPSESEIEDLRRDMNKTGVL</sequence>
<protein>
    <recommendedName>
        <fullName evidence="1">4-hydroxy-tetrahydrodipicolinate synthase</fullName>
        <shortName evidence="1">HTPA synthase</shortName>
        <ecNumber evidence="1">4.3.3.7</ecNumber>
    </recommendedName>
</protein>
<evidence type="ECO:0000255" key="1">
    <source>
        <dbReference type="HAMAP-Rule" id="MF_00418"/>
    </source>
</evidence>
<evidence type="ECO:0000305" key="2"/>
<feature type="chain" id="PRO_0000103107" description="4-hydroxy-tetrahydrodipicolinate synthase">
    <location>
        <begin position="1"/>
        <end position="301"/>
    </location>
</feature>
<feature type="active site" description="Proton donor/acceptor" evidence="1">
    <location>
        <position position="145"/>
    </location>
</feature>
<feature type="active site" description="Schiff-base intermediate with substrate" evidence="1">
    <location>
        <position position="173"/>
    </location>
</feature>
<feature type="binding site" evidence="1">
    <location>
        <position position="57"/>
    </location>
    <ligand>
        <name>pyruvate</name>
        <dbReference type="ChEBI" id="CHEBI:15361"/>
    </ligand>
</feature>
<feature type="binding site" evidence="1">
    <location>
        <position position="213"/>
    </location>
    <ligand>
        <name>pyruvate</name>
        <dbReference type="ChEBI" id="CHEBI:15361"/>
    </ligand>
</feature>
<feature type="site" description="Part of a proton relay during catalysis" evidence="1">
    <location>
        <position position="56"/>
    </location>
</feature>
<feature type="site" description="Part of a proton relay during catalysis" evidence="1">
    <location>
        <position position="119"/>
    </location>
</feature>
<gene>
    <name evidence="1" type="primary">dapA</name>
    <name type="ordered locus">DIP1464</name>
</gene>
<name>DAPA_CORDI</name>